<feature type="chain" id="PRO_0000078687" description="Neuraminidase">
    <location>
        <begin position="1"/>
        <end position="470"/>
    </location>
</feature>
<feature type="topological domain" description="Intravirion" evidence="1">
    <location>
        <begin position="1"/>
        <end position="14"/>
    </location>
</feature>
<feature type="transmembrane region" description="Helical" evidence="1">
    <location>
        <begin position="15"/>
        <end position="35"/>
    </location>
</feature>
<feature type="topological domain" description="Virion surface" evidence="1">
    <location>
        <begin position="36"/>
        <end position="470"/>
    </location>
</feature>
<feature type="region of interest" description="Involved in apical transport and lipid raft association" evidence="1">
    <location>
        <begin position="11"/>
        <end position="32"/>
    </location>
</feature>
<feature type="region of interest" description="Hypervariable stalk region" evidence="1">
    <location>
        <begin position="32"/>
        <end position="86"/>
    </location>
</feature>
<feature type="region of interest" description="Head of neuraminidase" evidence="1">
    <location>
        <begin position="89"/>
        <end position="470"/>
    </location>
</feature>
<feature type="active site" description="Proton donor/acceptor" evidence="1">
    <location>
        <position position="149"/>
    </location>
</feature>
<feature type="active site" description="Nucleophile" evidence="1">
    <location>
        <position position="402"/>
    </location>
</feature>
<feature type="binding site" evidence="1">
    <location>
        <position position="116"/>
    </location>
    <ligand>
        <name>substrate</name>
    </ligand>
</feature>
<feature type="binding site" evidence="1">
    <location>
        <position position="150"/>
    </location>
    <ligand>
        <name>substrate</name>
    </ligand>
</feature>
<feature type="binding site" evidence="1">
    <location>
        <begin position="275"/>
        <end position="276"/>
    </location>
    <ligand>
        <name>substrate</name>
    </ligand>
</feature>
<feature type="binding site" evidence="1">
    <location>
        <position position="291"/>
    </location>
    <ligand>
        <name>substrate</name>
    </ligand>
</feature>
<feature type="binding site" evidence="1">
    <location>
        <position position="292"/>
    </location>
    <ligand>
        <name>Ca(2+)</name>
        <dbReference type="ChEBI" id="CHEBI:29108"/>
    </ligand>
</feature>
<feature type="binding site" evidence="1">
    <location>
        <position position="296"/>
    </location>
    <ligand>
        <name>Ca(2+)</name>
        <dbReference type="ChEBI" id="CHEBI:29108"/>
    </ligand>
</feature>
<feature type="binding site" evidence="1">
    <location>
        <position position="322"/>
    </location>
    <ligand>
        <name>Ca(2+)</name>
        <dbReference type="ChEBI" id="CHEBI:29108"/>
    </ligand>
</feature>
<feature type="binding site" evidence="1">
    <location>
        <position position="368"/>
    </location>
    <ligand>
        <name>substrate</name>
    </ligand>
</feature>
<feature type="glycosylation site" description="N-linked (GlcNAc...) asparagine; by host" evidence="1">
    <location>
        <position position="42"/>
    </location>
</feature>
<feature type="glycosylation site" description="N-linked (GlcNAc...) asparagine; by host" evidence="1">
    <location>
        <position position="46"/>
    </location>
</feature>
<feature type="glycosylation site" description="N-linked (GlcNAc...) asparagine; by host" evidence="1">
    <location>
        <position position="54"/>
    </location>
</feature>
<feature type="glycosylation site" description="N-linked (GlcNAc...) asparagine; by host" evidence="1">
    <location>
        <position position="84"/>
    </location>
</feature>
<feature type="glycosylation site" description="N-linked (GlcNAc...) asparagine; by host" evidence="1">
    <location>
        <position position="144"/>
    </location>
</feature>
<feature type="glycosylation site" description="N-linked (GlcNAc...) asparagine; by host" evidence="1">
    <location>
        <position position="293"/>
    </location>
</feature>
<feature type="glycosylation site" description="N-linked (GlcNAc...) asparagine; by host" evidence="1">
    <location>
        <position position="398"/>
    </location>
</feature>
<feature type="disulfide bond" evidence="1">
    <location>
        <begin position="90"/>
        <end position="417"/>
    </location>
</feature>
<feature type="disulfide bond" evidence="1">
    <location>
        <begin position="122"/>
        <end position="127"/>
    </location>
</feature>
<feature type="disulfide bond" evidence="1">
    <location>
        <begin position="182"/>
        <end position="229"/>
    </location>
</feature>
<feature type="disulfide bond" evidence="1">
    <location>
        <begin position="231"/>
        <end position="236"/>
    </location>
</feature>
<feature type="disulfide bond" evidence="1">
    <location>
        <begin position="277"/>
        <end position="290"/>
    </location>
</feature>
<feature type="disulfide bond" evidence="1">
    <location>
        <begin position="279"/>
        <end position="288"/>
    </location>
</feature>
<feature type="disulfide bond" evidence="1">
    <location>
        <begin position="316"/>
        <end position="335"/>
    </location>
</feature>
<feature type="disulfide bond" evidence="1">
    <location>
        <begin position="421"/>
        <end position="446"/>
    </location>
</feature>
<reference key="1">
    <citation type="journal article" date="1993" name="Virology">
        <title>Phylogenetic analysis of the N8 neuraminidase gene of influenza A viruses.</title>
        <authorList>
            <person name="Saito T."/>
            <person name="Kawaoka Y."/>
            <person name="Webster R.G."/>
        </authorList>
    </citation>
    <scope>NUCLEOTIDE SEQUENCE [GENOMIC RNA]</scope>
</reference>
<reference key="2">
    <citation type="journal article" date="2004" name="Virus Res.">
        <title>Assembly and budding of influenza virus.</title>
        <authorList>
            <person name="Nayak D.P."/>
            <person name="Hui E.K."/>
            <person name="Barman S."/>
        </authorList>
    </citation>
    <scope>REVIEW</scope>
</reference>
<reference key="3">
    <citation type="journal article" date="2005" name="N. Engl. J. Med.">
        <title>Neuraminidase inhibitors for influenza.</title>
        <authorList>
            <person name="Moscona A."/>
        </authorList>
    </citation>
    <scope>REVIEW</scope>
</reference>
<reference key="4">
    <citation type="journal article" date="2005" name="Biol. Pharm. Bull.">
        <title>Sialobiology of influenza: molecular mechanism of host range variation of influenza viruses.</title>
        <authorList>
            <person name="Suzuki Y."/>
        </authorList>
    </citation>
    <scope>REVIEW</scope>
</reference>
<sequence length="470" mass="52146">MNPNQKIITIGSVSLGLVVLNILLHIVSITITVLVLPGNGNNGSCNETVIREYNETVRIEKVTQWHNTNVIEYIERPESDHFMNNTEPLCDVKGFAPFSKDNGIRIGSRGHVFVIREPFVSCSPTECRTFFLTQGSLLNDKHSNGTVKDRSPYRTLMSVEIGQSPNVYQARFEAVAWSATACHDGKKWMTIGVTGPDAKAVAVVHYGGIPTDVIQSWAGDISRTQESSCTCIQGECYWVMTDGPANRQAQYRAFKAKQGKIIGQTEISFNGGHIEECSCYPNEGKVECVCRDNWTGTNRPVLVISSDLSYRVGYLCAGLPSDTPRGEDSQFTGSCTSPMGNQGYGVKGFGFRQGNDVWMGRTISRTSRSGFEVLKVRNGWIQNSKDQIKRQVVVDNLNWSGYSGSFTLPVELTKRSCLVPCFWVEMIRGKPEETTIWTSSSSIVMCGVDHEIADWSWHDGAILPFDIDKM</sequence>
<accession>Q07573</accession>
<proteinExistence type="inferred from homology"/>
<organismHost>
    <name type="scientific">Aves</name>
    <dbReference type="NCBI Taxonomy" id="8782"/>
</organismHost>
<organismHost>
    <name type="scientific">Equus caballus</name>
    <name type="common">Horse</name>
    <dbReference type="NCBI Taxonomy" id="9796"/>
</organismHost>
<organism>
    <name type="scientific">Influenza A virus (strain A/Duck/Memphis/928/1974 H3N8)</name>
    <dbReference type="NCBI Taxonomy" id="383553"/>
    <lineage>
        <taxon>Viruses</taxon>
        <taxon>Riboviria</taxon>
        <taxon>Orthornavirae</taxon>
        <taxon>Negarnaviricota</taxon>
        <taxon>Polyploviricotina</taxon>
        <taxon>Insthoviricetes</taxon>
        <taxon>Articulavirales</taxon>
        <taxon>Orthomyxoviridae</taxon>
        <taxon>Alphainfluenzavirus</taxon>
        <taxon>Alphainfluenzavirus influenzae</taxon>
        <taxon>Influenza A virus</taxon>
    </lineage>
</organism>
<keyword id="KW-0106">Calcium</keyword>
<keyword id="KW-1015">Disulfide bond</keyword>
<keyword id="KW-0325">Glycoprotein</keyword>
<keyword id="KW-0326">Glycosidase</keyword>
<keyword id="KW-1032">Host cell membrane</keyword>
<keyword id="KW-1043">Host membrane</keyword>
<keyword id="KW-0378">Hydrolase</keyword>
<keyword id="KW-0472">Membrane</keyword>
<keyword id="KW-0479">Metal-binding</keyword>
<keyword id="KW-0735">Signal-anchor</keyword>
<keyword id="KW-0812">Transmembrane</keyword>
<keyword id="KW-1133">Transmembrane helix</keyword>
<keyword id="KW-0946">Virion</keyword>
<dbReference type="EC" id="3.2.1.18" evidence="1"/>
<dbReference type="EMBL" id="L06575">
    <property type="protein sequence ID" value="AAA43404.1"/>
    <property type="molecule type" value="Genomic_RNA"/>
</dbReference>
<dbReference type="SMR" id="Q07573"/>
<dbReference type="CAZy" id="GH34">
    <property type="family name" value="Glycoside Hydrolase Family 34"/>
</dbReference>
<dbReference type="GlyCosmos" id="Q07573">
    <property type="glycosylation" value="7 sites, No reported glycans"/>
</dbReference>
<dbReference type="GO" id="GO:0020002">
    <property type="term" value="C:host cell plasma membrane"/>
    <property type="evidence" value="ECO:0007669"/>
    <property type="project" value="UniProtKB-SubCell"/>
</dbReference>
<dbReference type="GO" id="GO:0016020">
    <property type="term" value="C:membrane"/>
    <property type="evidence" value="ECO:0007669"/>
    <property type="project" value="UniProtKB-UniRule"/>
</dbReference>
<dbReference type="GO" id="GO:0055036">
    <property type="term" value="C:virion membrane"/>
    <property type="evidence" value="ECO:0007669"/>
    <property type="project" value="UniProtKB-SubCell"/>
</dbReference>
<dbReference type="GO" id="GO:0004308">
    <property type="term" value="F:exo-alpha-sialidase activity"/>
    <property type="evidence" value="ECO:0007669"/>
    <property type="project" value="UniProtKB-UniRule"/>
</dbReference>
<dbReference type="GO" id="GO:0046872">
    <property type="term" value="F:metal ion binding"/>
    <property type="evidence" value="ECO:0007669"/>
    <property type="project" value="UniProtKB-UniRule"/>
</dbReference>
<dbReference type="GO" id="GO:0005975">
    <property type="term" value="P:carbohydrate metabolic process"/>
    <property type="evidence" value="ECO:0007669"/>
    <property type="project" value="InterPro"/>
</dbReference>
<dbReference type="GO" id="GO:0046761">
    <property type="term" value="P:viral budding from plasma membrane"/>
    <property type="evidence" value="ECO:0007669"/>
    <property type="project" value="UniProtKB-UniRule"/>
</dbReference>
<dbReference type="Gene3D" id="2.120.10.10">
    <property type="match status" value="1"/>
</dbReference>
<dbReference type="HAMAP" id="MF_04071">
    <property type="entry name" value="INFV_NRAM"/>
    <property type="match status" value="1"/>
</dbReference>
<dbReference type="InterPro" id="IPR001860">
    <property type="entry name" value="Glyco_hydro_34"/>
</dbReference>
<dbReference type="InterPro" id="IPR036278">
    <property type="entry name" value="Sialidase_sf"/>
</dbReference>
<dbReference type="Pfam" id="PF00064">
    <property type="entry name" value="Neur"/>
    <property type="match status" value="1"/>
</dbReference>
<dbReference type="SUPFAM" id="SSF50939">
    <property type="entry name" value="Sialidases"/>
    <property type="match status" value="1"/>
</dbReference>
<evidence type="ECO:0000255" key="1">
    <source>
        <dbReference type="HAMAP-Rule" id="MF_04071"/>
    </source>
</evidence>
<gene>
    <name evidence="1" type="primary">NA</name>
</gene>
<protein>
    <recommendedName>
        <fullName evidence="1">Neuraminidase</fullName>
        <ecNumber evidence="1">3.2.1.18</ecNumber>
    </recommendedName>
</protein>
<name>NRAM_I74A2</name>
<comment type="function">
    <text evidence="1">Catalyzes the removal of terminal sialic acid residues from viral and cellular glycoconjugates. Cleaves off the terminal sialic acids on the glycosylated HA during virus budding to facilitate virus release. Additionally helps virus spread through the circulation by further removing sialic acids from the cell surface. These cleavages prevent self-aggregation and ensure the efficient spread of the progeny virus from cell to cell. Otherwise, infection would be limited to one round of replication. Described as a receptor-destroying enzyme because it cleaves a terminal sialic acid from the cellular receptors. May facilitate viral invasion of the upper airways by cleaving the sialic acid moieties on the mucin of the airway epithelial cells. Likely to plays a role in the budding process through its association with lipid rafts during intracellular transport. May additionally display a raft-association independent effect on budding. Plays a role in the determination of host range restriction on replication and virulence. Sialidase activity in late endosome/lysosome traffic seems to enhance virus replication.</text>
</comment>
<comment type="catalytic activity">
    <reaction evidence="1">
        <text>Hydrolysis of alpha-(2-&gt;3)-, alpha-(2-&gt;6)-, alpha-(2-&gt;8)- glycosidic linkages of terminal sialic acid residues in oligosaccharides, glycoproteins, glycolipids, colominic acid and synthetic substrates.</text>
        <dbReference type="EC" id="3.2.1.18"/>
    </reaction>
</comment>
<comment type="cofactor">
    <cofactor evidence="1">
        <name>Ca(2+)</name>
        <dbReference type="ChEBI" id="CHEBI:29108"/>
    </cofactor>
</comment>
<comment type="activity regulation">
    <text evidence="1">Inhibited by the neuraminidase inhibitors zanamivir (Relenza) and oseltamivir (Tamiflu). These drugs interfere with the release of progeny virus from infected cells and are effective against all influenza strains. Resistance to neuraminidase inhibitors is quite rare.</text>
</comment>
<comment type="subunit">
    <text evidence="1">Homotetramer.</text>
</comment>
<comment type="subcellular location">
    <subcellularLocation>
        <location evidence="1">Virion membrane</location>
    </subcellularLocation>
    <subcellularLocation>
        <location evidence="1">Host apical cell membrane</location>
        <topology evidence="1">Single-pass type II membrane protein</topology>
    </subcellularLocation>
    <text evidence="1">Preferentially accumulates at the apical plasma membrane in infected polarized epithelial cells, which is the virus assembly site. Uses lipid rafts for cell surface transport and apical sorting. In the virion, forms a mushroom-shaped spike on the surface of the membrane.</text>
</comment>
<comment type="domain">
    <text evidence="1">Intact N-terminus is essential for virion morphogenesis. Possesses two apical sorting signals, one in the ectodomain, which is likely to be a glycan, and the other in the transmembrane domain. The transmembrane domain also plays a role in lipid raft association.</text>
</comment>
<comment type="PTM">
    <text evidence="1">N-glycosylated.</text>
</comment>
<comment type="miscellaneous">
    <text>The influenza A genome consist of 8 RNA segments. Genetic variation of hemagglutinin and/or neuraminidase genes results in the emergence of new influenza strains. The mechanism of variation can be the result of point mutations or the result of genetic reassortment between segments of two different strains.</text>
</comment>
<comment type="similarity">
    <text evidence="1">Belongs to the glycosyl hydrolase 34 family.</text>
</comment>